<sequence>MMRWRLAVLFLTLLASTTGDDTTTKASVSTTTKKGTDGPHLTTDDEGFLTVIQGFATQLQCVLNTCSKDVIWYKDGSQISKGSQFLNTTSEKAYKIQHSIEVDYEKGCSGECDDSKPCGDGFSCVDNQCCSCRREEFTLVLRNLTFDESGRYRCQLGNKSELLEFQVEVLESGLKGGFHENISYDHSECCQEKGISPLCRGMCKPSEMDQHHFDPTSCKTDDYKHFLSCATEDGTRSHVHCCKTQLVPSFCYDFCSGDFQMLRRSHRLCLYYLPEIFSCLDRAYLPYPDPPTAIEVNAVEHDKLSVCWKEPEKHESNKMFPILDYAVYFKEIPNFPLLGGDMGLPLLTGDYSDIGDIQEDDYQQEEDDAEEVVKDSTIAPRGKRDVDFESDGVKVQIREKRSTMVIVTRDDVTNSTTIREFAFQNVNTTERCVTLSDLRSSTRYIVYVTARNEYGTSVPSVRNIASTNVHMVKNNASLPDSMKCCTDANVTSFCSSKMCNVAEDPSSFSTITIATTCRAEWPKVSPCIADGRNHTDCCLKKGVQHDCLEICSGSTKELGVHSVLCLNLDLQAIYQCIRQGYETHPSAPGNVTISELTAHSVTVQWTEPNSNAHLVENYTLFIRKNEHGEAVRTVKNVISPHVELGLDPDSEYVLTLQSHSANGTSLPSTAKLFSTLPTTRPPLCTIGEPIYMNDGRVMICDAVNPCPNGFRCTGAGSDLSYCCPHDGTHSSEEFTSCCKEQKMPESCMSSCQYNMTLPESCKENLNTWVQCASEGHDHLRCCLQEEVSKPCQTACMHPFTVPADECFSEVSKYRTCFSAAHQALPAAVRNVEVSSISKDSATISWEDLEANIIVFRVQLFEKGGNLIKTENSSADIFRFIDLEPNKDYSVRVTAINFLGEGPPSWNATFTTKPAQIYEGDRPVAPEKLRISWNSGPRVNVTWDPVSVRRNAEVVTKPIEYTIYYLDTEQSSTWTTLRTNQTWVVMRDLRKDALYYVYVTAKEDNRTSRSSSIITILAQKDSPGLPEPTIVIEPDHKDGVFSPGEKISINCSLPNIKKHLNIDLTVGSHVVQNDHGALWVILETEADEAMDTATCAVSDTDGRQHVAMKHLVLERKASVTMKKDKIRVLDDQSVEIECIYRGGGLDPKISFEKDGKKASRGFLNLKKTEAGYVAKWHIRKVKQEDAGFYKCVVTSSDGSRVEASSEVIFSTETLPVNPKLILQCCEDEGITGDCLQACNIGRTSLSIKNQNCTRFAVSLLKCASDIRDHSDCCIASGVTSKCLPLCSGDSFSPDIDCSEHAVSIMTCSVKSHEHAPSEVSNVRIKASEGKVNIEWDYPLTKDYKYFAVYYRKAHDDHEDWHKLKTIQQNIELDVDPSEDYEVGILAANALGHSRLMYSAIPKDSEPRRSASKGSSSAFWIVVILVVFGVLIAGLAVLSKRRELPYPIGKFIGRRNDPNQPTVAFENPAYGEPWGGAEVEIRGLGGSATTGTAAATQSEWQSANLEANSTTDNSHEYRNGMRYAKLET</sequence>
<feature type="signal peptide" evidence="1">
    <location>
        <begin position="1"/>
        <end position="19"/>
    </location>
</feature>
<feature type="chain" id="PRO_0000248521" description="Ig-like and fibronectin type-III domain-containing protein 2" evidence="7">
    <location>
        <begin position="20"/>
        <end position="1526"/>
    </location>
</feature>
<feature type="topological domain" description="Extracellular" evidence="1">
    <location>
        <begin position="20"/>
        <end position="1415"/>
    </location>
</feature>
<feature type="transmembrane region" description="Helical" evidence="1">
    <location>
        <begin position="1416"/>
        <end position="1436"/>
    </location>
</feature>
<feature type="topological domain" description="Cytoplasmic" evidence="1">
    <location>
        <begin position="1437"/>
        <end position="1526"/>
    </location>
</feature>
<feature type="domain" description="Ig-like C2-type 1">
    <location>
        <begin position="39"/>
        <end position="170"/>
    </location>
</feature>
<feature type="domain" description="Fibronectin type-III 1" evidence="3">
    <location>
        <begin position="379"/>
        <end position="470"/>
    </location>
</feature>
<feature type="domain" description="Fibronectin type-III 2" evidence="3">
    <location>
        <begin position="587"/>
        <end position="678"/>
    </location>
</feature>
<feature type="domain" description="WR1">
    <location>
        <begin position="682"/>
        <end position="724"/>
    </location>
</feature>
<feature type="domain" description="Fibronectin type-III 3" evidence="3">
    <location>
        <begin position="827"/>
        <end position="914"/>
    </location>
</feature>
<feature type="domain" description="Fibronectin type-III 4" evidence="3">
    <location>
        <begin position="924"/>
        <end position="1020"/>
    </location>
</feature>
<feature type="domain" description="Ig-like C2-type 2">
    <location>
        <begin position="1116"/>
        <end position="1207"/>
    </location>
</feature>
<feature type="domain" description="Fibronectin type-III 5" evidence="3">
    <location>
        <begin position="1314"/>
        <end position="1406"/>
    </location>
</feature>
<feature type="region of interest" description="Disordered" evidence="4">
    <location>
        <begin position="20"/>
        <end position="39"/>
    </location>
</feature>
<feature type="region of interest" description="Disordered" evidence="4">
    <location>
        <begin position="1485"/>
        <end position="1518"/>
    </location>
</feature>
<feature type="compositionally biased region" description="Low complexity" evidence="4">
    <location>
        <begin position="24"/>
        <end position="33"/>
    </location>
</feature>
<feature type="compositionally biased region" description="Polar residues" evidence="4">
    <location>
        <begin position="1495"/>
        <end position="1510"/>
    </location>
</feature>
<feature type="glycosylation site" description="N-linked (GlcNAc...) asparagine" evidence="6">
    <location>
        <position position="87"/>
    </location>
</feature>
<feature type="glycosylation site" description="N-linked (GlcNAc...) asparagine" evidence="1">
    <location>
        <position position="143"/>
    </location>
</feature>
<feature type="glycosylation site" description="N-linked (GlcNAc...) asparagine" evidence="6">
    <location>
        <position position="158"/>
    </location>
</feature>
<feature type="glycosylation site" description="N-linked (GlcNAc...) asparagine" evidence="1">
    <location>
        <position position="181"/>
    </location>
</feature>
<feature type="glycosylation site" description="N-linked (GlcNAc...) asparagine" evidence="1">
    <location>
        <position position="414"/>
    </location>
</feature>
<feature type="glycosylation site" description="N-linked (GlcNAc...) asparagine" evidence="5 6">
    <location>
        <position position="427"/>
    </location>
</feature>
<feature type="glycosylation site" description="N-linked (GlcNAc...) asparagine" evidence="1">
    <location>
        <position position="475"/>
    </location>
</feature>
<feature type="glycosylation site" description="N-linked (GlcNAc...) asparagine" evidence="6">
    <location>
        <position position="489"/>
    </location>
</feature>
<feature type="glycosylation site" description="N-linked (GlcNAc...) asparagine" evidence="6">
    <location>
        <position position="533"/>
    </location>
</feature>
<feature type="glycosylation site" description="N-linked (GlcNAc...) asparagine" evidence="1">
    <location>
        <position position="590"/>
    </location>
</feature>
<feature type="glycosylation site" description="N-linked (GlcNAc...) asparagine" evidence="1">
    <location>
        <position position="617"/>
    </location>
</feature>
<feature type="glycosylation site" description="N-linked (GlcNAc...) asparagine" evidence="6">
    <location>
        <position position="662"/>
    </location>
</feature>
<feature type="glycosylation site" description="N-linked (GlcNAc...) asparagine" evidence="1">
    <location>
        <position position="754"/>
    </location>
</feature>
<feature type="glycosylation site" description="N-linked (GlcNAc...) asparagine" evidence="6">
    <location>
        <position position="871"/>
    </location>
</feature>
<feature type="glycosylation site" description="N-linked (GlcNAc...) asparagine" evidence="6">
    <location>
        <position position="906"/>
    </location>
</feature>
<feature type="glycosylation site" description="N-linked (GlcNAc...) asparagine" evidence="6">
    <location>
        <position position="939"/>
    </location>
</feature>
<feature type="glycosylation site" description="N-linked (GlcNAc...) asparagine" evidence="6">
    <location>
        <position position="979"/>
    </location>
</feature>
<feature type="glycosylation site" description="N-linked (GlcNAc...) asparagine" evidence="1">
    <location>
        <position position="1004"/>
    </location>
</feature>
<feature type="glycosylation site" description="N-linked (GlcNAc...) asparagine" evidence="6">
    <location>
        <position position="1049"/>
    </location>
</feature>
<feature type="glycosylation site" description="N-linked (GlcNAc...) asparagine" evidence="1">
    <location>
        <position position="1250"/>
    </location>
</feature>
<feature type="disulfide bond" evidence="2">
    <location>
        <begin position="61"/>
        <end position="154"/>
    </location>
</feature>
<feature type="disulfide bond" evidence="2">
    <location>
        <begin position="1137"/>
        <end position="1190"/>
    </location>
</feature>
<feature type="splice variant" id="VSP_039736" description="In isoform b." evidence="7">
    <original>LPYPDPPTAIEVNAVEHDKLSVCWKEPEKHESNKM</original>
    <variation>RMLSNEKGGVSSARGGAGGAAHLSAFMIDKPVRG</variation>
    <location>
        <begin position="285"/>
        <end position="319"/>
    </location>
</feature>
<feature type="splice variant" id="VSP_039737" description="In isoform b." evidence="7">
    <location>
        <begin position="320"/>
        <end position="1526"/>
    </location>
</feature>
<dbReference type="EMBL" id="Z70680">
    <property type="protein sequence ID" value="CAC42260.1"/>
    <property type="molecule type" value="Genomic_DNA"/>
</dbReference>
<dbReference type="EMBL" id="Z70680">
    <property type="protein sequence ID" value="CAX65049.1"/>
    <property type="molecule type" value="Genomic_DNA"/>
</dbReference>
<dbReference type="EMBL" id="Z83123">
    <property type="protein sequence ID" value="CAX65049.1"/>
    <property type="status" value="JOINED"/>
    <property type="molecule type" value="Genomic_DNA"/>
</dbReference>
<dbReference type="PIR" id="T19473">
    <property type="entry name" value="T19473"/>
</dbReference>
<dbReference type="RefSeq" id="NP_001255649.1">
    <molecule id="O18023-1"/>
    <property type="nucleotide sequence ID" value="NM_001268720.4"/>
</dbReference>
<dbReference type="RefSeq" id="NP_001255650.1">
    <molecule id="O18023-2"/>
    <property type="nucleotide sequence ID" value="NM_001268721.3"/>
</dbReference>
<dbReference type="BioGRID" id="43292">
    <property type="interactions" value="1"/>
</dbReference>
<dbReference type="FunCoup" id="O18023">
    <property type="interactions" value="116"/>
</dbReference>
<dbReference type="STRING" id="6239.C25G4.10a.1"/>
<dbReference type="GlyCosmos" id="O18023">
    <property type="glycosylation" value="20 sites, No reported glycans"/>
</dbReference>
<dbReference type="iPTMnet" id="O18023"/>
<dbReference type="PaxDb" id="6239-C25G4.10a"/>
<dbReference type="PeptideAtlas" id="O18023"/>
<dbReference type="EnsemblMetazoa" id="C25G4.10a.1">
    <molecule id="O18023-1"/>
    <property type="protein sequence ID" value="C25G4.10a.1"/>
    <property type="gene ID" value="WBGene00007736"/>
</dbReference>
<dbReference type="EnsemblMetazoa" id="C25G4.10b.1">
    <molecule id="O18023-2"/>
    <property type="protein sequence ID" value="C25G4.10b.1"/>
    <property type="gene ID" value="WBGene00007736"/>
</dbReference>
<dbReference type="GeneID" id="178199"/>
<dbReference type="KEGG" id="cel:CELE_C25G4.10"/>
<dbReference type="UCSC" id="C25G4.10">
    <molecule id="O18023-1"/>
    <property type="organism name" value="c. elegans"/>
</dbReference>
<dbReference type="UCSC" id="C25G4.11">
    <property type="organism name" value="c. elegans"/>
</dbReference>
<dbReference type="AGR" id="WB:WBGene00007736"/>
<dbReference type="CTD" id="178199"/>
<dbReference type="WormBase" id="C25G4.10a">
    <molecule id="O18023-1"/>
    <property type="protein sequence ID" value="CE15638"/>
    <property type="gene ID" value="WBGene00007736"/>
    <property type="gene designation" value="igdb-2"/>
</dbReference>
<dbReference type="WormBase" id="C25G4.10b">
    <molecule id="O18023-2"/>
    <property type="protein sequence ID" value="CE28207"/>
    <property type="gene ID" value="WBGene00007736"/>
    <property type="gene designation" value="igdb-2"/>
</dbReference>
<dbReference type="eggNOG" id="ENOG502QRA3">
    <property type="taxonomic scope" value="Eukaryota"/>
</dbReference>
<dbReference type="GeneTree" id="ENSGT00940000156511"/>
<dbReference type="HOGENOM" id="CLU_005277_0_0_1"/>
<dbReference type="InParanoid" id="O18023"/>
<dbReference type="OMA" id="CCAAQNV"/>
<dbReference type="OrthoDB" id="5843172at2759"/>
<dbReference type="PhylomeDB" id="O18023"/>
<dbReference type="Reactome" id="R-CEL-114608">
    <property type="pathway name" value="Platelet degranulation"/>
</dbReference>
<dbReference type="PRO" id="PR:O18023"/>
<dbReference type="Proteomes" id="UP000001940">
    <property type="component" value="Chromosome IV"/>
</dbReference>
<dbReference type="Bgee" id="WBGene00007736">
    <property type="expression patterns" value="Expressed in embryo and 3 other cell types or tissues"/>
</dbReference>
<dbReference type="GO" id="GO:0031430">
    <property type="term" value="C:M band"/>
    <property type="evidence" value="ECO:0000318"/>
    <property type="project" value="GO_Central"/>
</dbReference>
<dbReference type="GO" id="GO:0005886">
    <property type="term" value="C:plasma membrane"/>
    <property type="evidence" value="ECO:0007669"/>
    <property type="project" value="UniProtKB-SubCell"/>
</dbReference>
<dbReference type="GO" id="GO:0045214">
    <property type="term" value="P:sarcomere organization"/>
    <property type="evidence" value="ECO:0000318"/>
    <property type="project" value="GO_Central"/>
</dbReference>
<dbReference type="CDD" id="cd00063">
    <property type="entry name" value="FN3"/>
    <property type="match status" value="4"/>
</dbReference>
<dbReference type="FunFam" id="2.60.40.10:FF:003749">
    <property type="match status" value="1"/>
</dbReference>
<dbReference type="FunFam" id="2.60.40.10:FF:003809">
    <property type="match status" value="1"/>
</dbReference>
<dbReference type="FunFam" id="2.60.40.10:FF:002443">
    <property type="entry name" value="Ig-like and fibronectin type-III domain-containing protein 1"/>
    <property type="match status" value="1"/>
</dbReference>
<dbReference type="FunFam" id="2.60.40.10:FF:003106">
    <property type="entry name" value="Ig-like and fibronectin type-III domain-containing protein 1"/>
    <property type="match status" value="1"/>
</dbReference>
<dbReference type="Gene3D" id="2.60.40.10">
    <property type="entry name" value="Immunoglobulins"/>
    <property type="match status" value="7"/>
</dbReference>
<dbReference type="InterPro" id="IPR006150">
    <property type="entry name" value="Cys_repeat_1"/>
</dbReference>
<dbReference type="InterPro" id="IPR002602">
    <property type="entry name" value="DB"/>
</dbReference>
<dbReference type="InterPro" id="IPR003961">
    <property type="entry name" value="FN3_dom"/>
</dbReference>
<dbReference type="InterPro" id="IPR036116">
    <property type="entry name" value="FN3_sf"/>
</dbReference>
<dbReference type="InterPro" id="IPR007110">
    <property type="entry name" value="Ig-like_dom"/>
</dbReference>
<dbReference type="InterPro" id="IPR036179">
    <property type="entry name" value="Ig-like_dom_sf"/>
</dbReference>
<dbReference type="InterPro" id="IPR013783">
    <property type="entry name" value="Ig-like_fold"/>
</dbReference>
<dbReference type="InterPro" id="IPR003599">
    <property type="entry name" value="Ig_sub"/>
</dbReference>
<dbReference type="InterPro" id="IPR003598">
    <property type="entry name" value="Ig_sub2"/>
</dbReference>
<dbReference type="InterPro" id="IPR013151">
    <property type="entry name" value="Immunoglobulin_dom"/>
</dbReference>
<dbReference type="InterPro" id="IPR050964">
    <property type="entry name" value="Striated_Muscle_Regulatory"/>
</dbReference>
<dbReference type="PANTHER" id="PTHR13817:SF73">
    <property type="entry name" value="FIBRONECTIN TYPE-III DOMAIN-CONTAINING PROTEIN"/>
    <property type="match status" value="1"/>
</dbReference>
<dbReference type="PANTHER" id="PTHR13817">
    <property type="entry name" value="TITIN"/>
    <property type="match status" value="1"/>
</dbReference>
<dbReference type="Pfam" id="PF01682">
    <property type="entry name" value="DB"/>
    <property type="match status" value="4"/>
</dbReference>
<dbReference type="Pfam" id="PF00041">
    <property type="entry name" value="fn3"/>
    <property type="match status" value="2"/>
</dbReference>
<dbReference type="Pfam" id="PF00047">
    <property type="entry name" value="ig"/>
    <property type="match status" value="1"/>
</dbReference>
<dbReference type="SMART" id="SM00060">
    <property type="entry name" value="FN3"/>
    <property type="match status" value="5"/>
</dbReference>
<dbReference type="SMART" id="SM00409">
    <property type="entry name" value="IG"/>
    <property type="match status" value="2"/>
</dbReference>
<dbReference type="SMART" id="SM00408">
    <property type="entry name" value="IGc2"/>
    <property type="match status" value="2"/>
</dbReference>
<dbReference type="SMART" id="SM00289">
    <property type="entry name" value="WR1"/>
    <property type="match status" value="2"/>
</dbReference>
<dbReference type="SUPFAM" id="SSF49265">
    <property type="entry name" value="Fibronectin type III"/>
    <property type="match status" value="3"/>
</dbReference>
<dbReference type="SUPFAM" id="SSF48726">
    <property type="entry name" value="Immunoglobulin"/>
    <property type="match status" value="2"/>
</dbReference>
<dbReference type="PROSITE" id="PS50853">
    <property type="entry name" value="FN3"/>
    <property type="match status" value="5"/>
</dbReference>
<dbReference type="PROSITE" id="PS50835">
    <property type="entry name" value="IG_LIKE"/>
    <property type="match status" value="2"/>
</dbReference>
<evidence type="ECO:0000255" key="1"/>
<evidence type="ECO:0000255" key="2">
    <source>
        <dbReference type="PROSITE-ProRule" id="PRU00114"/>
    </source>
</evidence>
<evidence type="ECO:0000255" key="3">
    <source>
        <dbReference type="PROSITE-ProRule" id="PRU00316"/>
    </source>
</evidence>
<evidence type="ECO:0000256" key="4">
    <source>
        <dbReference type="SAM" id="MobiDB-lite"/>
    </source>
</evidence>
<evidence type="ECO:0000269" key="5">
    <source>
    </source>
</evidence>
<evidence type="ECO:0000269" key="6">
    <source>
    </source>
</evidence>
<evidence type="ECO:0000305" key="7"/>
<evidence type="ECO:0000312" key="8">
    <source>
        <dbReference type="WormBase" id="C25G4.10a"/>
    </source>
</evidence>
<name>IGDB2_CAEEL</name>
<gene>
    <name evidence="8" type="primary">igdb-2</name>
    <name evidence="8" type="ORF">C25G4.10</name>
</gene>
<protein>
    <recommendedName>
        <fullName evidence="7">Ig-like and fibronectin type-III domain-containing protein 2</fullName>
    </recommendedName>
</protein>
<organism>
    <name type="scientific">Caenorhabditis elegans</name>
    <dbReference type="NCBI Taxonomy" id="6239"/>
    <lineage>
        <taxon>Eukaryota</taxon>
        <taxon>Metazoa</taxon>
        <taxon>Ecdysozoa</taxon>
        <taxon>Nematoda</taxon>
        <taxon>Chromadorea</taxon>
        <taxon>Rhabditida</taxon>
        <taxon>Rhabditina</taxon>
        <taxon>Rhabditomorpha</taxon>
        <taxon>Rhabditoidea</taxon>
        <taxon>Rhabditidae</taxon>
        <taxon>Peloderinae</taxon>
        <taxon>Caenorhabditis</taxon>
    </lineage>
</organism>
<reference key="1">
    <citation type="journal article" date="1998" name="Science">
        <title>Genome sequence of the nematode C. elegans: a platform for investigating biology.</title>
        <authorList>
            <consortium name="The C. elegans sequencing consortium"/>
        </authorList>
    </citation>
    <scope>NUCLEOTIDE SEQUENCE [LARGE SCALE GENOMIC DNA]</scope>
    <scope>ALTERNATIVE SPLICING</scope>
    <source>
        <strain>Bristol N2</strain>
    </source>
</reference>
<reference key="2">
    <citation type="journal article" date="2003" name="Nat. Biotechnol.">
        <title>Lectin affinity capture, isotope-coded tagging and mass spectrometry to identify N-linked glycoproteins.</title>
        <authorList>
            <person name="Kaji H."/>
            <person name="Saito H."/>
            <person name="Yamauchi Y."/>
            <person name="Shinkawa T."/>
            <person name="Taoka M."/>
            <person name="Hirabayashi J."/>
            <person name="Kasai K."/>
            <person name="Takahashi N."/>
            <person name="Isobe T."/>
        </authorList>
    </citation>
    <scope>GLYCOSYLATION [LARGE SCALE ANALYSIS] AT ASN-427</scope>
    <scope>IDENTIFICATION BY MASS SPECTROMETRY</scope>
    <source>
        <strain>Bristol N2</strain>
    </source>
</reference>
<reference key="3">
    <citation type="journal article" date="2007" name="Mol. Cell. Proteomics">
        <title>Proteomics reveals N-linked glycoprotein diversity in Caenorhabditis elegans and suggests an atypical translocation mechanism for integral membrane proteins.</title>
        <authorList>
            <person name="Kaji H."/>
            <person name="Kamiie J."/>
            <person name="Kawakami H."/>
            <person name="Kido K."/>
            <person name="Yamauchi Y."/>
            <person name="Shinkawa T."/>
            <person name="Taoka M."/>
            <person name="Takahashi N."/>
            <person name="Isobe T."/>
        </authorList>
    </citation>
    <scope>GLYCOSYLATION [LARGE SCALE ANALYSIS] AT ASN-87; ASN-158; ASN-181; ASN-414; ASN-427; ASN-489; ASN-533; ASN-662; ASN-871; ASN-906; ASN-939; ASN-979 AND ASN-1049</scope>
    <scope>IDENTIFICATION BY MASS SPECTROMETRY</scope>
    <source>
        <strain>Bristol N2</strain>
    </source>
</reference>
<keyword id="KW-0025">Alternative splicing</keyword>
<keyword id="KW-1003">Cell membrane</keyword>
<keyword id="KW-1015">Disulfide bond</keyword>
<keyword id="KW-0325">Glycoprotein</keyword>
<keyword id="KW-0393">Immunoglobulin domain</keyword>
<keyword id="KW-0472">Membrane</keyword>
<keyword id="KW-1185">Reference proteome</keyword>
<keyword id="KW-0677">Repeat</keyword>
<keyword id="KW-0732">Signal</keyword>
<keyword id="KW-0812">Transmembrane</keyword>
<keyword id="KW-1133">Transmembrane helix</keyword>
<proteinExistence type="evidence at protein level"/>
<accession>O18023</accession>
<accession>C1P642</accession>
<accession>Q18174</accession>
<accession>Q95ZY5</accession>
<comment type="subcellular location">
    <subcellularLocation>
        <location evidence="7">Cell membrane</location>
        <topology evidence="7">Single-pass type I membrane protein</topology>
    </subcellularLocation>
</comment>
<comment type="alternative products">
    <event type="alternative splicing"/>
    <isoform>
        <id>O18023-1</id>
        <name>a</name>
        <sequence type="displayed"/>
    </isoform>
    <isoform>
        <id>O18023-2</id>
        <name>b</name>
        <sequence type="described" ref="VSP_039736 VSP_039737"/>
    </isoform>
</comment>